<keyword id="KW-0251">Elongation factor</keyword>
<keyword id="KW-0342">GTP-binding</keyword>
<keyword id="KW-0496">Mitochondrion</keyword>
<keyword id="KW-0547">Nucleotide-binding</keyword>
<keyword id="KW-0648">Protein biosynthesis</keyword>
<keyword id="KW-1185">Reference proteome</keyword>
<keyword id="KW-0809">Transit peptide</keyword>
<proteinExistence type="inferred from homology"/>
<accession>A5DK38</accession>
<feature type="transit peptide" description="Mitochondrion" evidence="1">
    <location>
        <begin position="1"/>
        <end position="37"/>
    </location>
</feature>
<feature type="chain" id="PRO_0000385580" description="Elongation factor G, mitochondrial">
    <location>
        <begin position="38"/>
        <end position="760"/>
    </location>
</feature>
<feature type="domain" description="tr-type G">
    <location>
        <begin position="68"/>
        <end position="349"/>
    </location>
</feature>
<feature type="binding site" evidence="1">
    <location>
        <begin position="77"/>
        <end position="84"/>
    </location>
    <ligand>
        <name>GTP</name>
        <dbReference type="ChEBI" id="CHEBI:37565"/>
    </ligand>
</feature>
<feature type="binding site" evidence="1">
    <location>
        <begin position="148"/>
        <end position="152"/>
    </location>
    <ligand>
        <name>GTP</name>
        <dbReference type="ChEBI" id="CHEBI:37565"/>
    </ligand>
</feature>
<feature type="binding site" evidence="1">
    <location>
        <begin position="202"/>
        <end position="205"/>
    </location>
    <ligand>
        <name>GTP</name>
        <dbReference type="ChEBI" id="CHEBI:37565"/>
    </ligand>
</feature>
<gene>
    <name evidence="1" type="primary">MEF1</name>
    <name type="ORF">PGUG_03639</name>
</gene>
<organism>
    <name type="scientific">Meyerozyma guilliermondii (strain ATCC 6260 / CBS 566 / DSM 6381 / JCM 1539 / NBRC 10279 / NRRL Y-324)</name>
    <name type="common">Yeast</name>
    <name type="synonym">Candida guilliermondii</name>
    <dbReference type="NCBI Taxonomy" id="294746"/>
    <lineage>
        <taxon>Eukaryota</taxon>
        <taxon>Fungi</taxon>
        <taxon>Dikarya</taxon>
        <taxon>Ascomycota</taxon>
        <taxon>Saccharomycotina</taxon>
        <taxon>Pichiomycetes</taxon>
        <taxon>Debaryomycetaceae</taxon>
        <taxon>Meyerozyma</taxon>
    </lineage>
</organism>
<comment type="function">
    <text evidence="1">Mitochondrial GTPase that catalyzes the GTP-dependent ribosomal translocation step during translation elongation. During this step, the ribosome changes from the pre-translocational (PRE) to the post-translocational (POST) state as the newly formed A-site-bound peptidyl-tRNA and P-site-bound deacylated tRNA move to the P and E sites, respectively. Catalyzes the coordinated movement of the two tRNA molecules, the mRNA and conformational changes in the ribosome.</text>
</comment>
<comment type="pathway">
    <text evidence="1">Protein biosynthesis; polypeptide chain elongation.</text>
</comment>
<comment type="subcellular location">
    <subcellularLocation>
        <location evidence="1">Mitochondrion</location>
    </subcellularLocation>
</comment>
<comment type="similarity">
    <text evidence="2">Belongs to the TRAFAC class translation factor GTPase superfamily. Classic translation factor GTPase family. EF-G/EF-2 subfamily.</text>
</comment>
<evidence type="ECO:0000255" key="1">
    <source>
        <dbReference type="HAMAP-Rule" id="MF_03061"/>
    </source>
</evidence>
<evidence type="ECO:0000305" key="2"/>
<sequence length="760" mass="84255">MIRGMLPRGLRALRPSVSPTVVSSSLHRNFHSSIRRFDEKIPETYEEEKVIIDEINQSLTEKDLASSSRLRNIGVSAHIDSGKTTFTERVLYYTGRIKAIHEVRGRDAVGAKMDHMELEREKGITIQSAATYCSWDKDDKNYHFNLIDTPGHIDFTIEVERALRVLDGAVLVVCAVSGVQSQTVTVDRQMRRYNVPRVTFINKMDRMGADPFRAIEQINLKLKTPAAAIQVPIGAESELKGVVNIIDRVALYNEGAQGEEIRAAEVPAELADLVEEKRALLIETLADVDEEIADLYLEGQEPTVPQIKAAIRRATIGRKFTPVLMGSALANKGVQPVLDAVVDYLPQPNEILNTGLDISTGVEKRTNLIPSSTAPFVGLAFKLEEGKYGQLTYIRVYQGKLKKGSYMNHIKSGKKVKVSRLVRMHSNDMEDVDEVGAGEICATFGIDCASGDTFIGHNSEQQIAMSSMFVPEAVISLSISPKSKDNGQFSKAMNRFQKEDPTFRVKYDPESKETIISGMGELHLEIYVERMKREYGVECITGKPQVSYREAITAPTTFDYTHKKQSGGSGQYGRVMGEMTPLEGENKFSQHIVGGKIPEKFLFACSKGFEDSLEKGPLIGHRVLGVHMHINDGQTHVVDSSELSFRTATHGAFRQAFLNAKPVILEPIMSVEVSAPNEFQGSVVGLINKLGGMILETVNGQDEFTVTAECSLNTMFGFSTSLRACTQGKGEFSLEFCKYSQCAPQLQRELIAEHEKKQKK</sequence>
<reference key="1">
    <citation type="journal article" date="2009" name="Nature">
        <title>Evolution of pathogenicity and sexual reproduction in eight Candida genomes.</title>
        <authorList>
            <person name="Butler G."/>
            <person name="Rasmussen M.D."/>
            <person name="Lin M.F."/>
            <person name="Santos M.A.S."/>
            <person name="Sakthikumar S."/>
            <person name="Munro C.A."/>
            <person name="Rheinbay E."/>
            <person name="Grabherr M."/>
            <person name="Forche A."/>
            <person name="Reedy J.L."/>
            <person name="Agrafioti I."/>
            <person name="Arnaud M.B."/>
            <person name="Bates S."/>
            <person name="Brown A.J.P."/>
            <person name="Brunke S."/>
            <person name="Costanzo M.C."/>
            <person name="Fitzpatrick D.A."/>
            <person name="de Groot P.W.J."/>
            <person name="Harris D."/>
            <person name="Hoyer L.L."/>
            <person name="Hube B."/>
            <person name="Klis F.M."/>
            <person name="Kodira C."/>
            <person name="Lennard N."/>
            <person name="Logue M.E."/>
            <person name="Martin R."/>
            <person name="Neiman A.M."/>
            <person name="Nikolaou E."/>
            <person name="Quail M.A."/>
            <person name="Quinn J."/>
            <person name="Santos M.C."/>
            <person name="Schmitzberger F.F."/>
            <person name="Sherlock G."/>
            <person name="Shah P."/>
            <person name="Silverstein K.A.T."/>
            <person name="Skrzypek M.S."/>
            <person name="Soll D."/>
            <person name="Staggs R."/>
            <person name="Stansfield I."/>
            <person name="Stumpf M.P.H."/>
            <person name="Sudbery P.E."/>
            <person name="Srikantha T."/>
            <person name="Zeng Q."/>
            <person name="Berman J."/>
            <person name="Berriman M."/>
            <person name="Heitman J."/>
            <person name="Gow N.A.R."/>
            <person name="Lorenz M.C."/>
            <person name="Birren B.W."/>
            <person name="Kellis M."/>
            <person name="Cuomo C.A."/>
        </authorList>
    </citation>
    <scope>NUCLEOTIDE SEQUENCE [LARGE SCALE GENOMIC DNA]</scope>
    <source>
        <strain>ATCC 6260 / CBS 566 / DSM 6381 / JCM 1539 / NBRC 10279 / NRRL Y-324</strain>
    </source>
</reference>
<dbReference type="EMBL" id="CH408158">
    <property type="protein sequence ID" value="EDK39541.2"/>
    <property type="molecule type" value="Genomic_DNA"/>
</dbReference>
<dbReference type="RefSeq" id="XP_001484258.1">
    <property type="nucleotide sequence ID" value="XM_001484208.1"/>
</dbReference>
<dbReference type="SMR" id="A5DK38"/>
<dbReference type="FunCoup" id="A5DK38">
    <property type="interactions" value="670"/>
</dbReference>
<dbReference type="STRING" id="294746.A5DK38"/>
<dbReference type="GeneID" id="5125862"/>
<dbReference type="KEGG" id="pgu:PGUG_03639"/>
<dbReference type="VEuPathDB" id="FungiDB:PGUG_03639"/>
<dbReference type="eggNOG" id="KOG0465">
    <property type="taxonomic scope" value="Eukaryota"/>
</dbReference>
<dbReference type="HOGENOM" id="CLU_002794_4_0_1"/>
<dbReference type="InParanoid" id="A5DK38"/>
<dbReference type="OMA" id="GQFAKVQ"/>
<dbReference type="OrthoDB" id="198619at2759"/>
<dbReference type="UniPathway" id="UPA00345"/>
<dbReference type="Proteomes" id="UP000001997">
    <property type="component" value="Unassembled WGS sequence"/>
</dbReference>
<dbReference type="GO" id="GO:0005739">
    <property type="term" value="C:mitochondrion"/>
    <property type="evidence" value="ECO:0007669"/>
    <property type="project" value="UniProtKB-SubCell"/>
</dbReference>
<dbReference type="GO" id="GO:0005525">
    <property type="term" value="F:GTP binding"/>
    <property type="evidence" value="ECO:0007669"/>
    <property type="project" value="UniProtKB-UniRule"/>
</dbReference>
<dbReference type="GO" id="GO:0003924">
    <property type="term" value="F:GTPase activity"/>
    <property type="evidence" value="ECO:0007669"/>
    <property type="project" value="UniProtKB-UniRule"/>
</dbReference>
<dbReference type="GO" id="GO:0003746">
    <property type="term" value="F:translation elongation factor activity"/>
    <property type="evidence" value="ECO:0007669"/>
    <property type="project" value="UniProtKB-UniRule"/>
</dbReference>
<dbReference type="GO" id="GO:0070125">
    <property type="term" value="P:mitochondrial translational elongation"/>
    <property type="evidence" value="ECO:0007669"/>
    <property type="project" value="UniProtKB-UniRule"/>
</dbReference>
<dbReference type="CDD" id="cd01886">
    <property type="entry name" value="EF-G"/>
    <property type="match status" value="1"/>
</dbReference>
<dbReference type="CDD" id="cd16262">
    <property type="entry name" value="EFG_III"/>
    <property type="match status" value="1"/>
</dbReference>
<dbReference type="CDD" id="cd01434">
    <property type="entry name" value="EFG_mtEFG1_IV"/>
    <property type="match status" value="1"/>
</dbReference>
<dbReference type="CDD" id="cd04091">
    <property type="entry name" value="mtEFG1_II_like"/>
    <property type="match status" value="1"/>
</dbReference>
<dbReference type="FunFam" id="3.30.230.10:FF:000003">
    <property type="entry name" value="Elongation factor G"/>
    <property type="match status" value="1"/>
</dbReference>
<dbReference type="FunFam" id="3.30.70.870:FF:000001">
    <property type="entry name" value="Elongation factor G"/>
    <property type="match status" value="1"/>
</dbReference>
<dbReference type="FunFam" id="2.40.30.10:FF:000022">
    <property type="entry name" value="Elongation factor G, mitochondrial"/>
    <property type="match status" value="1"/>
</dbReference>
<dbReference type="FunFam" id="3.30.70.240:FF:000015">
    <property type="entry name" value="Elongation factor G, mitochondrial"/>
    <property type="match status" value="1"/>
</dbReference>
<dbReference type="FunFam" id="3.40.50.300:FF:000558">
    <property type="entry name" value="Elongation factor G, mitochondrial"/>
    <property type="match status" value="1"/>
</dbReference>
<dbReference type="Gene3D" id="3.30.230.10">
    <property type="match status" value="1"/>
</dbReference>
<dbReference type="Gene3D" id="3.30.70.240">
    <property type="match status" value="1"/>
</dbReference>
<dbReference type="Gene3D" id="3.30.70.870">
    <property type="entry name" value="Elongation Factor G (Translational Gtpase), domain 3"/>
    <property type="match status" value="1"/>
</dbReference>
<dbReference type="Gene3D" id="3.40.50.300">
    <property type="entry name" value="P-loop containing nucleotide triphosphate hydrolases"/>
    <property type="match status" value="1"/>
</dbReference>
<dbReference type="Gene3D" id="2.40.30.10">
    <property type="entry name" value="Translation factors"/>
    <property type="match status" value="1"/>
</dbReference>
<dbReference type="HAMAP" id="MF_00054_B">
    <property type="entry name" value="EF_G_EF_2_B"/>
    <property type="match status" value="1"/>
</dbReference>
<dbReference type="InterPro" id="IPR041095">
    <property type="entry name" value="EFG_II"/>
</dbReference>
<dbReference type="InterPro" id="IPR009022">
    <property type="entry name" value="EFG_III"/>
</dbReference>
<dbReference type="InterPro" id="IPR035647">
    <property type="entry name" value="EFG_III/V"/>
</dbReference>
<dbReference type="InterPro" id="IPR047872">
    <property type="entry name" value="EFG_IV"/>
</dbReference>
<dbReference type="InterPro" id="IPR000640">
    <property type="entry name" value="EFG_V-like"/>
</dbReference>
<dbReference type="InterPro" id="IPR004161">
    <property type="entry name" value="EFTu-like_2"/>
</dbReference>
<dbReference type="InterPro" id="IPR027417">
    <property type="entry name" value="P-loop_NTPase"/>
</dbReference>
<dbReference type="InterPro" id="IPR020568">
    <property type="entry name" value="Ribosomal_Su5_D2-typ_SF"/>
</dbReference>
<dbReference type="InterPro" id="IPR014721">
    <property type="entry name" value="Ribsml_uS5_D2-typ_fold_subgr"/>
</dbReference>
<dbReference type="InterPro" id="IPR005225">
    <property type="entry name" value="Small_GTP-bd"/>
</dbReference>
<dbReference type="InterPro" id="IPR000795">
    <property type="entry name" value="T_Tr_GTP-bd_dom"/>
</dbReference>
<dbReference type="InterPro" id="IPR009000">
    <property type="entry name" value="Transl_B-barrel_sf"/>
</dbReference>
<dbReference type="InterPro" id="IPR004540">
    <property type="entry name" value="Transl_elong_EFG/EF2"/>
</dbReference>
<dbReference type="InterPro" id="IPR005517">
    <property type="entry name" value="Transl_elong_EFG/EF2_IV"/>
</dbReference>
<dbReference type="NCBIfam" id="TIGR00484">
    <property type="entry name" value="EF-G"/>
    <property type="match status" value="1"/>
</dbReference>
<dbReference type="NCBIfam" id="NF009381">
    <property type="entry name" value="PRK12740.1-5"/>
    <property type="match status" value="1"/>
</dbReference>
<dbReference type="NCBIfam" id="TIGR00231">
    <property type="entry name" value="small_GTP"/>
    <property type="match status" value="1"/>
</dbReference>
<dbReference type="PANTHER" id="PTHR43636">
    <property type="entry name" value="ELONGATION FACTOR G, MITOCHONDRIAL"/>
    <property type="match status" value="1"/>
</dbReference>
<dbReference type="PANTHER" id="PTHR43636:SF2">
    <property type="entry name" value="ELONGATION FACTOR G, MITOCHONDRIAL"/>
    <property type="match status" value="1"/>
</dbReference>
<dbReference type="Pfam" id="PF00679">
    <property type="entry name" value="EFG_C"/>
    <property type="match status" value="1"/>
</dbReference>
<dbReference type="Pfam" id="PF14492">
    <property type="entry name" value="EFG_III"/>
    <property type="match status" value="1"/>
</dbReference>
<dbReference type="Pfam" id="PF03764">
    <property type="entry name" value="EFG_IV"/>
    <property type="match status" value="1"/>
</dbReference>
<dbReference type="Pfam" id="PF00009">
    <property type="entry name" value="GTP_EFTU"/>
    <property type="match status" value="1"/>
</dbReference>
<dbReference type="Pfam" id="PF03144">
    <property type="entry name" value="GTP_EFTU_D2"/>
    <property type="match status" value="1"/>
</dbReference>
<dbReference type="PRINTS" id="PR00315">
    <property type="entry name" value="ELONGATNFCT"/>
</dbReference>
<dbReference type="SMART" id="SM00838">
    <property type="entry name" value="EFG_C"/>
    <property type="match status" value="1"/>
</dbReference>
<dbReference type="SMART" id="SM00889">
    <property type="entry name" value="EFG_IV"/>
    <property type="match status" value="1"/>
</dbReference>
<dbReference type="SUPFAM" id="SSF54980">
    <property type="entry name" value="EF-G C-terminal domain-like"/>
    <property type="match status" value="2"/>
</dbReference>
<dbReference type="SUPFAM" id="SSF52540">
    <property type="entry name" value="P-loop containing nucleoside triphosphate hydrolases"/>
    <property type="match status" value="1"/>
</dbReference>
<dbReference type="SUPFAM" id="SSF54211">
    <property type="entry name" value="Ribosomal protein S5 domain 2-like"/>
    <property type="match status" value="1"/>
</dbReference>
<dbReference type="SUPFAM" id="SSF50447">
    <property type="entry name" value="Translation proteins"/>
    <property type="match status" value="1"/>
</dbReference>
<dbReference type="PROSITE" id="PS51722">
    <property type="entry name" value="G_TR_2"/>
    <property type="match status" value="1"/>
</dbReference>
<protein>
    <recommendedName>
        <fullName evidence="1">Elongation factor G, mitochondrial</fullName>
        <shortName evidence="1">EF-Gmt</shortName>
    </recommendedName>
    <alternativeName>
        <fullName evidence="1">Elongation factor G 1, mitochondrial</fullName>
        <shortName evidence="1">mEF-G 1</shortName>
    </alternativeName>
    <alternativeName>
        <fullName evidence="1">Elongation factor G1</fullName>
    </alternativeName>
</protein>
<name>EFGM_PICGU</name>